<comment type="function">
    <text evidence="7 9">Guanylate cyclase involved in the production of the second messenger cGMP (PubMed:9188508). Regulates olfactory perception in AWC sensory neurons although may not be involved in the primary sensory transduction steps (PubMed:18817734).</text>
</comment>
<comment type="function">
    <text>Isoforms c: Regulates sensory integration of conflicting sensory cues in AIA interneurons (PubMed:21414922).</text>
</comment>
<comment type="function">
    <molecule>Isoform d</molecule>
    <text>Regulates sensory integration of conflicting sensory cues in AIA interneurons (PubMed:21414922).</text>
</comment>
<comment type="catalytic activity">
    <reaction evidence="9">
        <text>GTP = 3',5'-cyclic GMP + diphosphate</text>
        <dbReference type="Rhea" id="RHEA:13665"/>
        <dbReference type="ChEBI" id="CHEBI:33019"/>
        <dbReference type="ChEBI" id="CHEBI:37565"/>
        <dbReference type="ChEBI" id="CHEBI:57746"/>
        <dbReference type="EC" id="4.6.1.2"/>
    </reaction>
</comment>
<comment type="subcellular location">
    <molecule>Isoform c</molecule>
    <subcellularLocation>
        <location evidence="11">Cell membrane</location>
        <topology evidence="11">Single-pass type I membrane protein</topology>
    </subcellularLocation>
    <subcellularLocation>
        <location evidence="7">Cell projection</location>
        <location evidence="7">Dendrite</location>
    </subcellularLocation>
    <subcellularLocation>
        <location evidence="7">Cell projection</location>
        <location evidence="7">Axon</location>
    </subcellularLocation>
    <subcellularLocation>
        <location evidence="7">Perikaryon</location>
    </subcellularLocation>
    <text evidence="7">Excluded from the neuronal sensory cilia.</text>
</comment>
<comment type="subcellular location">
    <molecule>Isoform d</molecule>
    <subcellularLocation>
        <location evidence="11">Cell membrane</location>
        <topology evidence="11">Single-pass type I membrane protein</topology>
    </subcellularLocation>
    <subcellularLocation>
        <location evidence="7">Cell projection</location>
        <location evidence="7">Dendrite</location>
    </subcellularLocation>
    <subcellularLocation>
        <location evidence="7">Cell projection</location>
        <location evidence="7">Axon</location>
    </subcellularLocation>
    <subcellularLocation>
        <location evidence="7">Perikaryon</location>
    </subcellularLocation>
    <text evidence="7">Enriched in the axon of AWC sensory neurons. Is excluded from the neuronal sensory cilia.</text>
</comment>
<comment type="alternative products">
    <event type="alternative splicing"/>
    <isoform>
        <id>Q86GV3-1</id>
        <name evidence="16">c</name>
        <name evidence="12">GCY-X1</name>
        <sequence type="displayed"/>
    </isoform>
    <isoform>
        <id>Q86GV3-2</id>
        <name evidence="14">a</name>
        <sequence type="described" ref="VSP_057712 VSP_057713 VSP_057714 VSP_057715"/>
    </isoform>
    <isoform>
        <id>Q86GV3-3</id>
        <name evidence="15">b</name>
        <sequence type="described" ref="VSP_057710 VSP_057716 VSP_057717"/>
    </isoform>
    <isoform>
        <id>Q86GV3-4</id>
        <name evidence="17">d</name>
        <sequence type="described" ref="VSP_057711 VSP_057714 VSP_057715"/>
    </isoform>
</comment>
<comment type="tissue specificity">
    <text evidence="6 8">Expressed in head neurons, ventral cord and tail neurons, body wall muscle, hypodermis, somatic gonad and intestine (PubMed:16547101). Isoform d is expressed specifically in AIA interneurons (PubMed:21414922).</text>
</comment>
<comment type="domain">
    <text evidence="3">The protein kinase domain is predicted to be catalytically inactive.</text>
</comment>
<comment type="similarity">
    <text evidence="2">Belongs to the adenylyl cyclase class-4/guanylyl cyclase family.</text>
</comment>
<keyword id="KW-0025">Alternative splicing</keyword>
<keyword id="KW-0067">ATP-binding</keyword>
<keyword id="KW-1003">Cell membrane</keyword>
<keyword id="KW-0966">Cell projection</keyword>
<keyword id="KW-0141">cGMP biosynthesis</keyword>
<keyword id="KW-0145">Chemotaxis</keyword>
<keyword id="KW-0175">Coiled coil</keyword>
<keyword id="KW-0325">Glycoprotein</keyword>
<keyword id="KW-0342">GTP-binding</keyword>
<keyword id="KW-0456">Lyase</keyword>
<keyword id="KW-0460">Magnesium</keyword>
<keyword id="KW-0472">Membrane</keyword>
<keyword id="KW-0479">Metal-binding</keyword>
<keyword id="KW-0547">Nucleotide-binding</keyword>
<keyword id="KW-0675">Receptor</keyword>
<keyword id="KW-1185">Reference proteome</keyword>
<keyword id="KW-0732">Signal</keyword>
<keyword id="KW-0812">Transmembrane</keyword>
<keyword id="KW-1133">Transmembrane helix</keyword>
<reference evidence="11" key="1">
    <citation type="journal article" date="1997" name="J. Biol. Chem.">
        <title>The cloning of a Caenorhabditis elegans guanylyl cyclase and the construction of a ligand-sensitive mammalian/nematode chimeric receptor.</title>
        <authorList>
            <person name="Baude E.J."/>
            <person name="Arora V.K."/>
            <person name="Yu S."/>
            <person name="Garbers D.L."/>
            <person name="Wedel B.J."/>
        </authorList>
    </citation>
    <scope>NUCLEOTIDE SEQUENCE [MRNA] (ISOFORM C)</scope>
    <scope>FUNCTION</scope>
    <scope>CATALYTIC ACTIVITY</scope>
</reference>
<reference evidence="11" key="2">
    <citation type="journal article" date="2008" name="Neuron">
        <title>A behavioral switch: cGMP and PKC signaling in olfactory neurons reverses odor preference in C. elegans.</title>
        <authorList>
            <person name="Tsunozaki M."/>
            <person name="Chalasani S.H."/>
            <person name="Bargmann C.I."/>
        </authorList>
    </citation>
    <scope>NUCLEOTIDE SEQUENCE [MRNA] (ISOFORMS A; C AND D)</scope>
    <scope>FUNCTION</scope>
    <scope>SUBCELLULAR LOCATION</scope>
    <scope>MUTAGENESIS OF PHE-1204</scope>
</reference>
<reference evidence="13" key="3">
    <citation type="journal article" date="1998" name="Science">
        <title>Genome sequence of the nematode C. elegans: a platform for investigating biology.</title>
        <authorList>
            <consortium name="The C. elegans sequencing consortium"/>
        </authorList>
    </citation>
    <scope>NUCLEOTIDE SEQUENCE [LARGE SCALE GENOMIC DNA]</scope>
    <source>
        <strain evidence="13">Bristol N2</strain>
    </source>
</reference>
<reference evidence="11" key="4">
    <citation type="journal article" date="2006" name="Genetics">
        <title>Searching for neuronal left/right asymmetry: genomewide analysis of nematode receptor-type guanylyl cyclases.</title>
        <authorList>
            <person name="Ortiz C.O."/>
            <person name="Etchberger J.F."/>
            <person name="Posy S.L."/>
            <person name="Frokjaer-Jensen C."/>
            <person name="Lockery S."/>
            <person name="Honig B."/>
            <person name="Hobert O."/>
        </authorList>
    </citation>
    <scope>TISSUE SPECIFICITY</scope>
</reference>
<reference evidence="11" key="5">
    <citation type="journal article" date="2011" name="J. Neurosci.">
        <title>Behavioral choice between conflicting alternatives is regulated by a receptor guanylyl cyclase, GCY-28, and a receptor tyrosine kinase, SCD-2, in AIA interneurons of Caenorhabditis elegans.</title>
        <authorList>
            <person name="Shinkai Y."/>
            <person name="Yamamoto Y."/>
            <person name="Fujiwara M."/>
            <person name="Tabata T."/>
            <person name="Murayama T."/>
            <person name="Hirotsu T."/>
            <person name="Ikeda D.D."/>
            <person name="Tsunozaki M."/>
            <person name="Iino Y."/>
            <person name="Bargmann C.I."/>
            <person name="Katsura I."/>
            <person name="Ishihara T."/>
        </authorList>
    </citation>
    <scope>FUNCTION</scope>
    <scope>TISSUE SPECIFICITY</scope>
    <scope>MUTAGENESIS OF PHE-1204</scope>
</reference>
<feature type="signal peptide" evidence="1">
    <location>
        <begin position="1"/>
        <end position="18"/>
    </location>
</feature>
<feature type="chain" id="PRO_0000433295" description="Receptor-type guanylate cyclase gcy-28" evidence="1">
    <location>
        <begin position="19"/>
        <end position="1276"/>
    </location>
</feature>
<feature type="topological domain" description="Extracellular" evidence="1">
    <location>
        <begin position="19"/>
        <end position="515"/>
    </location>
</feature>
<feature type="transmembrane region" description="Helical" evidence="1">
    <location>
        <begin position="516"/>
        <end position="536"/>
    </location>
</feature>
<feature type="topological domain" description="Cytoplasmic" evidence="1">
    <location>
        <begin position="537"/>
        <end position="1276"/>
    </location>
</feature>
<feature type="domain" description="Protein kinase" evidence="3">
    <location>
        <begin position="717"/>
        <end position="1013"/>
    </location>
</feature>
<feature type="domain" description="Guanylate cyclase" evidence="2">
    <location>
        <begin position="1086"/>
        <end position="1215"/>
    </location>
</feature>
<feature type="region of interest" description="Disordered" evidence="5">
    <location>
        <begin position="562"/>
        <end position="601"/>
    </location>
</feature>
<feature type="region of interest" description="Disordered" evidence="5">
    <location>
        <begin position="635"/>
        <end position="709"/>
    </location>
</feature>
<feature type="coiled-coil region" evidence="1">
    <location>
        <begin position="1017"/>
        <end position="1063"/>
    </location>
</feature>
<feature type="compositionally biased region" description="Basic residues" evidence="5">
    <location>
        <begin position="567"/>
        <end position="577"/>
    </location>
</feature>
<feature type="compositionally biased region" description="Polar residues" evidence="5">
    <location>
        <begin position="590"/>
        <end position="599"/>
    </location>
</feature>
<feature type="compositionally biased region" description="Polar residues" evidence="5">
    <location>
        <begin position="642"/>
        <end position="660"/>
    </location>
</feature>
<feature type="binding site" evidence="3">
    <location>
        <begin position="723"/>
        <end position="731"/>
    </location>
    <ligand>
        <name>ATP</name>
        <dbReference type="ChEBI" id="CHEBI:30616"/>
    </ligand>
</feature>
<feature type="binding site" evidence="3">
    <location>
        <position position="756"/>
    </location>
    <ligand>
        <name>ATP</name>
        <dbReference type="ChEBI" id="CHEBI:30616"/>
    </ligand>
</feature>
<feature type="binding site" evidence="2">
    <location>
        <position position="1091"/>
    </location>
    <ligand>
        <name>Mg(2+)</name>
        <dbReference type="ChEBI" id="CHEBI:18420"/>
        <label>1</label>
    </ligand>
</feature>
<feature type="binding site" evidence="2">
    <location>
        <position position="1091"/>
    </location>
    <ligand>
        <name>Mg(2+)</name>
        <dbReference type="ChEBI" id="CHEBI:18420"/>
        <label>2</label>
    </ligand>
</feature>
<feature type="binding site" evidence="2">
    <location>
        <position position="1092"/>
    </location>
    <ligand>
        <name>Mg(2+)</name>
        <dbReference type="ChEBI" id="CHEBI:18420"/>
        <label>2</label>
    </ligand>
</feature>
<feature type="binding site" evidence="2">
    <location>
        <position position="1135"/>
    </location>
    <ligand>
        <name>Mg(2+)</name>
        <dbReference type="ChEBI" id="CHEBI:18420"/>
        <label>1</label>
    </ligand>
</feature>
<feature type="binding site" evidence="2">
    <location>
        <position position="1135"/>
    </location>
    <ligand>
        <name>Mg(2+)</name>
        <dbReference type="ChEBI" id="CHEBI:18420"/>
        <label>2</label>
    </ligand>
</feature>
<feature type="glycosylation site" description="N-linked (GlcNAc...) asparagine" evidence="4">
    <location>
        <position position="87"/>
    </location>
</feature>
<feature type="glycosylation site" description="N-linked (GlcNAc...) asparagine" evidence="4">
    <location>
        <position position="196"/>
    </location>
</feature>
<feature type="glycosylation site" description="N-linked (GlcNAc...) asparagine" evidence="4">
    <location>
        <position position="338"/>
    </location>
</feature>
<feature type="glycosylation site" description="N-linked (GlcNAc...) asparagine" evidence="4">
    <location>
        <position position="384"/>
    </location>
</feature>
<feature type="glycosylation site" description="N-linked (GlcNAc...) asparagine" evidence="4">
    <location>
        <position position="387"/>
    </location>
</feature>
<feature type="glycosylation site" description="N-linked (GlcNAc...) asparagine" evidence="4">
    <location>
        <position position="414"/>
    </location>
</feature>
<feature type="glycosylation site" description="N-linked (GlcNAc...) asparagine" evidence="4">
    <location>
        <position position="428"/>
    </location>
</feature>
<feature type="glycosylation site" description="N-linked (GlcNAc...) asparagine" evidence="4">
    <location>
        <position position="444"/>
    </location>
</feature>
<feature type="splice variant" id="VSP_057710" description="In isoform b." evidence="11">
    <location>
        <begin position="1"/>
        <end position="627"/>
    </location>
</feature>
<feature type="splice variant" id="VSP_057711" description="In isoform d." evidence="11">
    <original>MLRWLTLLSCILLTALHGNIVEDVGAAQQASYPPPPPPFPFNVIVILPKRESTYDNFGMTLQKAMPVIDIAVQEVIKAKKLPPGWINLTYWDSRLYEDILLAERHATVGVIQAYCEHRLDAILGFADNYGLATVTKVTAGLNGGIPILTTSGMPSLLNSKKEYPFLTRMQGSYRLLADSMYQLIAYHDEDSVSKSNSSLNYLNLIFFYHDKRRAVNRVIAQDESQETGATSSHCYFSLYAIKRYFTEKSKTFKREWALNTPQFPFDEDLVIERETFKQWLREISLQS</original>
    <variation>MWINSTRTLIFNHFVRIVLVLLLSHEVVTKSNRKFEEISVKHPIHLVIPLPDDDDFSDGKNPFLFSSHKVKPLADLALERVYREGILPNNSVNLIYRDSKLSDAIGPNVAVEQLLRKQIDCIIGYAYGYALAPVARMSPYWKNGIPIITPIGLTMSLDDKREYQLMTRINSPYKVVSSAVSTLFNTYKWKRHIFMFHHAKAPSVAVGECFLLMASLQHPLRKVMEMQHNFFTFNEDHGANISKAERHNQFRNYLRASSNMA</variation>
    <location>
        <begin position="1"/>
        <end position="287"/>
    </location>
</feature>
<feature type="splice variant" id="VSP_057712" description="In isoform a." evidence="11">
    <original>MLRWLTLLSCILLTALHGNIVEDVGAAQQASYPPPPPPFPFNVIVILPKRESTYDNFGMTLQKAMPVIDIAVQEVIKAKKLPPGWINLTYWDSRLYEDILLAERHATVGVIQAYCEHRLDAILGFADNYGLATVTKVTAGLNGGIPILTTSGMPSLLNSKKEYPFLTRMQGSYRLLADSMYQLIAYHDEDSVSKSNSSLNYLNLIFFYHDKRRAVNRVIAQDESQETGATSSH</original>
    <variation>MILSDVLLLSLVISSSSSSSHQHSLLPIDIVVGLPIEEGDRGKNPFLLTLAKSKPVFDVALQDVYHLRILPYGSLKVTFENSALSDAVGPQKMIEHYCNKTVDAIMGLPYVYALAPVARISKFWGQGVPVFTTTALVDELGDRNEFPLLTRMMGSYKSLGKLVTRIAERFEWQHYFFMFNDEVARGPRNKGRSE</variation>
    <location>
        <begin position="1"/>
        <end position="233"/>
    </location>
</feature>
<feature type="splice variant" id="VSP_057713" description="In isoform a." evidence="11">
    <original>YAIKRYFTEKSKTFKREWALNTPQFPFDEDLVIERETFKQWLREISLQSNV</original>
    <variation>SAIKNLIMNNKTSTWNVKMFSEFEADRLQYRALLSEASVMSNL</variation>
    <location>
        <begin position="239"/>
        <end position="289"/>
    </location>
</feature>
<feature type="splice variant" id="VSP_057714" description="In isoform a and isoform d." evidence="11">
    <original>P</original>
    <variation>PQ</variation>
    <location>
        <position position="510"/>
    </location>
</feature>
<feature type="splice variant" id="VSP_057715" description="In isoform a and isoform d." evidence="11">
    <location>
        <begin position="602"/>
        <end position="614"/>
    </location>
</feature>
<feature type="splice variant" id="VSP_057716" description="In isoform b." evidence="11">
    <original>PLKIHVSQQTYDILMQEAGFKLELRGSVEMKGKGMQTTYWLRGYK</original>
    <variation>RMFWNFSLYKIYKFKVFKNKIELDFLKNEKESIEFEGKKMVTEFN</variation>
    <location>
        <begin position="1220"/>
        <end position="1264"/>
    </location>
</feature>
<feature type="splice variant" id="VSP_057717" description="In isoform b." evidence="11">
    <location>
        <begin position="1265"/>
        <end position="1276"/>
    </location>
</feature>
<feature type="mutagenesis site" description="In ky713; loss of chemotaxis response to butanone. Defect in sensory integration when confronted to two opposing environmental chemicals." evidence="7 8">
    <original>F</original>
    <variation>L</variation>
    <location>
        <position position="1204"/>
    </location>
</feature>
<organism evidence="13">
    <name type="scientific">Caenorhabditis elegans</name>
    <dbReference type="NCBI Taxonomy" id="6239"/>
    <lineage>
        <taxon>Eukaryota</taxon>
        <taxon>Metazoa</taxon>
        <taxon>Ecdysozoa</taxon>
        <taxon>Nematoda</taxon>
        <taxon>Chromadorea</taxon>
        <taxon>Rhabditida</taxon>
        <taxon>Rhabditina</taxon>
        <taxon>Rhabditomorpha</taxon>
        <taxon>Rhabditoidea</taxon>
        <taxon>Rhabditidae</taxon>
        <taxon>Peloderinae</taxon>
        <taxon>Caenorhabditis</taxon>
    </lineage>
</organism>
<name>GCY28_CAEEL</name>
<accession>Q86GV3</accession>
<accession>H2L0J9</accession>
<accession>Q965F7</accession>
<accession>Q965F8</accession>
<evidence type="ECO:0000255" key="1"/>
<evidence type="ECO:0000255" key="2">
    <source>
        <dbReference type="PROSITE-ProRule" id="PRU00099"/>
    </source>
</evidence>
<evidence type="ECO:0000255" key="3">
    <source>
        <dbReference type="PROSITE-ProRule" id="PRU00159"/>
    </source>
</evidence>
<evidence type="ECO:0000255" key="4">
    <source>
        <dbReference type="PROSITE-ProRule" id="PRU00498"/>
    </source>
</evidence>
<evidence type="ECO:0000256" key="5">
    <source>
        <dbReference type="SAM" id="MobiDB-lite"/>
    </source>
</evidence>
<evidence type="ECO:0000269" key="6">
    <source>
    </source>
</evidence>
<evidence type="ECO:0000269" key="7">
    <source>
    </source>
</evidence>
<evidence type="ECO:0000269" key="8">
    <source>
    </source>
</evidence>
<evidence type="ECO:0000269" key="9">
    <source>
    </source>
</evidence>
<evidence type="ECO:0000303" key="10">
    <source>
    </source>
</evidence>
<evidence type="ECO:0000305" key="11"/>
<evidence type="ECO:0000305" key="12">
    <source>
    </source>
</evidence>
<evidence type="ECO:0000312" key="13">
    <source>
        <dbReference type="Proteomes" id="UP000001940"/>
    </source>
</evidence>
<evidence type="ECO:0000312" key="14">
    <source>
        <dbReference type="WormBase" id="T01A4.1a"/>
    </source>
</evidence>
<evidence type="ECO:0000312" key="15">
    <source>
        <dbReference type="WormBase" id="T01A4.1b"/>
    </source>
</evidence>
<evidence type="ECO:0000312" key="16">
    <source>
        <dbReference type="WormBase" id="T01A4.1c"/>
    </source>
</evidence>
<evidence type="ECO:0000312" key="17">
    <source>
        <dbReference type="WormBase" id="T01A4.1d"/>
    </source>
</evidence>
<dbReference type="EC" id="4.6.1.2" evidence="9"/>
<dbReference type="EMBL" id="FO081694">
    <property type="protein sequence ID" value="CCD73355.1"/>
    <property type="molecule type" value="Genomic_DNA"/>
</dbReference>
<dbReference type="EMBL" id="FO081694">
    <property type="protein sequence ID" value="CCD73353.1"/>
    <property type="molecule type" value="Genomic_DNA"/>
</dbReference>
<dbReference type="EMBL" id="FO081694">
    <property type="protein sequence ID" value="CCD73354.1"/>
    <property type="molecule type" value="Genomic_DNA"/>
</dbReference>
<dbReference type="EMBL" id="FO081694">
    <property type="protein sequence ID" value="CCD73356.1"/>
    <property type="molecule type" value="Genomic_DNA"/>
</dbReference>
<dbReference type="RefSeq" id="NP_001021600.1">
    <molecule id="Q86GV3-1"/>
    <property type="nucleotide sequence ID" value="NM_001026429.3"/>
</dbReference>
<dbReference type="RefSeq" id="NP_001249628.1">
    <molecule id="Q86GV3-4"/>
    <property type="nucleotide sequence ID" value="NM_001262699.2"/>
</dbReference>
<dbReference type="RefSeq" id="NP_001360115.1">
    <molecule id="Q86GV3-3"/>
    <property type="nucleotide sequence ID" value="NM_001372632.3"/>
</dbReference>
<dbReference type="RefSeq" id="NP_001380039.1">
    <molecule id="Q86GV3-2"/>
    <property type="nucleotide sequence ID" value="NM_001392156.1"/>
</dbReference>
<dbReference type="RefSeq" id="NP_491379.3">
    <property type="nucleotide sequence ID" value="NM_058978.3"/>
</dbReference>
<dbReference type="RefSeq" id="NP_491380.1">
    <property type="nucleotide sequence ID" value="NM_058979.1"/>
</dbReference>
<dbReference type="SMR" id="Q86GV3"/>
<dbReference type="FunCoup" id="Q86GV3">
    <property type="interactions" value="247"/>
</dbReference>
<dbReference type="STRING" id="6239.T01A4.1c.1"/>
<dbReference type="GlyCosmos" id="Q86GV3">
    <property type="glycosylation" value="8 sites, No reported glycans"/>
</dbReference>
<dbReference type="PaxDb" id="6239-T01A4.1c"/>
<dbReference type="PeptideAtlas" id="Q86GV3"/>
<dbReference type="EnsemblMetazoa" id="T01A4.1a.1">
    <molecule id="Q86GV3-2"/>
    <property type="protein sequence ID" value="T01A4.1a.1"/>
    <property type="gene ID" value="WBGene00020131"/>
</dbReference>
<dbReference type="EnsemblMetazoa" id="T01A4.1b.1">
    <molecule id="Q86GV3-3"/>
    <property type="protein sequence ID" value="T01A4.1b.1"/>
    <property type="gene ID" value="WBGene00020131"/>
</dbReference>
<dbReference type="EnsemblMetazoa" id="T01A4.1c.1">
    <molecule id="Q86GV3-1"/>
    <property type="protein sequence ID" value="T01A4.1c.1"/>
    <property type="gene ID" value="WBGene00020131"/>
</dbReference>
<dbReference type="EnsemblMetazoa" id="T01A4.1d.1">
    <molecule id="Q86GV3-4"/>
    <property type="protein sequence ID" value="T01A4.1d.1"/>
    <property type="gene ID" value="WBGene00020131"/>
</dbReference>
<dbReference type="GeneID" id="172051"/>
<dbReference type="KEGG" id="cel:CELE_T01A4.1"/>
<dbReference type="UCSC" id="T01A4.1c">
    <property type="organism name" value="c. elegans"/>
</dbReference>
<dbReference type="AGR" id="WB:WBGene00020131"/>
<dbReference type="CTD" id="172051"/>
<dbReference type="WormBase" id="T01A4.1a">
    <molecule id="Q86GV3-2"/>
    <property type="protein sequence ID" value="CE33582"/>
    <property type="gene ID" value="WBGene00020131"/>
    <property type="gene designation" value="gcy-28"/>
</dbReference>
<dbReference type="WormBase" id="T01A4.1b">
    <molecule id="Q86GV3-3"/>
    <property type="protein sequence ID" value="CE25977"/>
    <property type="gene ID" value="WBGene00020131"/>
    <property type="gene designation" value="gcy-28"/>
</dbReference>
<dbReference type="WormBase" id="T01A4.1c">
    <molecule id="Q86GV3-1"/>
    <property type="protein sequence ID" value="CE33583"/>
    <property type="gene ID" value="WBGene00020131"/>
    <property type="gene designation" value="gcy-28"/>
</dbReference>
<dbReference type="WormBase" id="T01A4.1d">
    <molecule id="Q86GV3-4"/>
    <property type="protein sequence ID" value="CE43478"/>
    <property type="gene ID" value="WBGene00020131"/>
    <property type="gene designation" value="gcy-28"/>
</dbReference>
<dbReference type="eggNOG" id="KOG1023">
    <property type="taxonomic scope" value="Eukaryota"/>
</dbReference>
<dbReference type="GeneTree" id="ENSGT00940000156223"/>
<dbReference type="InParanoid" id="Q86GV3"/>
<dbReference type="OMA" id="PISRTHI"/>
<dbReference type="OrthoDB" id="1890790at2759"/>
<dbReference type="PhylomeDB" id="Q86GV3"/>
<dbReference type="PRO" id="PR:Q86GV3"/>
<dbReference type="Proteomes" id="UP000001940">
    <property type="component" value="Chromosome I"/>
</dbReference>
<dbReference type="Bgee" id="WBGene00020131">
    <property type="expression patterns" value="Expressed in larva and 4 other cell types or tissues"/>
</dbReference>
<dbReference type="GO" id="GO:0030424">
    <property type="term" value="C:axon"/>
    <property type="evidence" value="ECO:0007669"/>
    <property type="project" value="UniProtKB-SubCell"/>
</dbReference>
<dbReference type="GO" id="GO:0044297">
    <property type="term" value="C:cell body"/>
    <property type="evidence" value="ECO:0000314"/>
    <property type="project" value="WormBase"/>
</dbReference>
<dbReference type="GO" id="GO:0030425">
    <property type="term" value="C:dendrite"/>
    <property type="evidence" value="ECO:0007669"/>
    <property type="project" value="UniProtKB-SubCell"/>
</dbReference>
<dbReference type="GO" id="GO:0043005">
    <property type="term" value="C:neuron projection"/>
    <property type="evidence" value="ECO:0000314"/>
    <property type="project" value="WormBase"/>
</dbReference>
<dbReference type="GO" id="GO:0043204">
    <property type="term" value="C:perikaryon"/>
    <property type="evidence" value="ECO:0007669"/>
    <property type="project" value="UniProtKB-SubCell"/>
</dbReference>
<dbReference type="GO" id="GO:0005886">
    <property type="term" value="C:plasma membrane"/>
    <property type="evidence" value="ECO:0000318"/>
    <property type="project" value="GO_Central"/>
</dbReference>
<dbReference type="GO" id="GO:0005524">
    <property type="term" value="F:ATP binding"/>
    <property type="evidence" value="ECO:0007669"/>
    <property type="project" value="UniProtKB-KW"/>
</dbReference>
<dbReference type="GO" id="GO:0005525">
    <property type="term" value="F:GTP binding"/>
    <property type="evidence" value="ECO:0007669"/>
    <property type="project" value="UniProtKB-KW"/>
</dbReference>
<dbReference type="GO" id="GO:0004383">
    <property type="term" value="F:guanylate cyclase activity"/>
    <property type="evidence" value="ECO:0000314"/>
    <property type="project" value="WormBase"/>
</dbReference>
<dbReference type="GO" id="GO:0046872">
    <property type="term" value="F:metal ion binding"/>
    <property type="evidence" value="ECO:0007669"/>
    <property type="project" value="UniProtKB-KW"/>
</dbReference>
<dbReference type="GO" id="GO:0001653">
    <property type="term" value="F:peptide receptor activity"/>
    <property type="evidence" value="ECO:0000318"/>
    <property type="project" value="GO_Central"/>
</dbReference>
<dbReference type="GO" id="GO:0004672">
    <property type="term" value="F:protein kinase activity"/>
    <property type="evidence" value="ECO:0007669"/>
    <property type="project" value="InterPro"/>
</dbReference>
<dbReference type="GO" id="GO:0006182">
    <property type="term" value="P:cGMP biosynthetic process"/>
    <property type="evidence" value="ECO:0000318"/>
    <property type="project" value="GO_Central"/>
</dbReference>
<dbReference type="GO" id="GO:0006935">
    <property type="term" value="P:chemotaxis"/>
    <property type="evidence" value="ECO:0000315"/>
    <property type="project" value="WormBase"/>
</dbReference>
<dbReference type="GO" id="GO:0035556">
    <property type="term" value="P:intracellular signal transduction"/>
    <property type="evidence" value="ECO:0007669"/>
    <property type="project" value="InterPro"/>
</dbReference>
<dbReference type="GO" id="GO:0042048">
    <property type="term" value="P:olfactory behavior"/>
    <property type="evidence" value="ECO:0000315"/>
    <property type="project" value="WormBase"/>
</dbReference>
<dbReference type="GO" id="GO:0007168">
    <property type="term" value="P:receptor guanylyl cyclase signaling pathway"/>
    <property type="evidence" value="ECO:0000318"/>
    <property type="project" value="GO_Central"/>
</dbReference>
<dbReference type="GO" id="GO:0007606">
    <property type="term" value="P:sensory perception of chemical stimulus"/>
    <property type="evidence" value="ECO:0000315"/>
    <property type="project" value="UniProtKB"/>
</dbReference>
<dbReference type="GO" id="GO:0050893">
    <property type="term" value="P:sensory processing"/>
    <property type="evidence" value="ECO:0000315"/>
    <property type="project" value="UniProtKB"/>
</dbReference>
<dbReference type="CDD" id="cd07302">
    <property type="entry name" value="CHD"/>
    <property type="match status" value="1"/>
</dbReference>
<dbReference type="CDD" id="cd14042">
    <property type="entry name" value="PK_GC-A_B"/>
    <property type="match status" value="1"/>
</dbReference>
<dbReference type="FunFam" id="3.40.50.2300:FF:001122">
    <property type="match status" value="1"/>
</dbReference>
<dbReference type="FunFam" id="1.10.510.10:FF:000420">
    <property type="entry name" value="Guanylate cyclase"/>
    <property type="match status" value="1"/>
</dbReference>
<dbReference type="FunFam" id="3.30.70.1230:FF:000004">
    <property type="entry name" value="Guanylate cyclase"/>
    <property type="match status" value="1"/>
</dbReference>
<dbReference type="FunFam" id="3.40.50.2300:FF:000721">
    <property type="entry name" value="Guanylate cyclase"/>
    <property type="match status" value="1"/>
</dbReference>
<dbReference type="Gene3D" id="3.40.50.2300">
    <property type="match status" value="3"/>
</dbReference>
<dbReference type="Gene3D" id="3.30.70.1230">
    <property type="entry name" value="Nucleotide cyclase"/>
    <property type="match status" value="1"/>
</dbReference>
<dbReference type="Gene3D" id="1.10.510.10">
    <property type="entry name" value="Transferase(Phosphotransferase) domain 1"/>
    <property type="match status" value="1"/>
</dbReference>
<dbReference type="InterPro" id="IPR001054">
    <property type="entry name" value="A/G_cyclase"/>
</dbReference>
<dbReference type="InterPro" id="IPR018297">
    <property type="entry name" value="A/G_cyclase_CS"/>
</dbReference>
<dbReference type="InterPro" id="IPR001828">
    <property type="entry name" value="ANF_lig-bd_rcpt"/>
</dbReference>
<dbReference type="InterPro" id="IPR001170">
    <property type="entry name" value="ANPR/GUC"/>
</dbReference>
<dbReference type="InterPro" id="IPR050401">
    <property type="entry name" value="Cyclic_nucleotide_synthase"/>
</dbReference>
<dbReference type="InterPro" id="IPR011009">
    <property type="entry name" value="Kinase-like_dom_sf"/>
</dbReference>
<dbReference type="InterPro" id="IPR029787">
    <property type="entry name" value="Nucleotide_cyclase"/>
</dbReference>
<dbReference type="InterPro" id="IPR028082">
    <property type="entry name" value="Peripla_BP_I"/>
</dbReference>
<dbReference type="InterPro" id="IPR000719">
    <property type="entry name" value="Prot_kinase_dom"/>
</dbReference>
<dbReference type="InterPro" id="IPR001245">
    <property type="entry name" value="Ser-Thr/Tyr_kinase_cat_dom"/>
</dbReference>
<dbReference type="PANTHER" id="PTHR11920:SF494">
    <property type="entry name" value="ATRIAL NATRIURETIC PEPTIDE RECEPTOR 2"/>
    <property type="match status" value="1"/>
</dbReference>
<dbReference type="PANTHER" id="PTHR11920">
    <property type="entry name" value="GUANYLYL CYCLASE"/>
    <property type="match status" value="1"/>
</dbReference>
<dbReference type="Pfam" id="PF01094">
    <property type="entry name" value="ANF_receptor"/>
    <property type="match status" value="1"/>
</dbReference>
<dbReference type="Pfam" id="PF00211">
    <property type="entry name" value="Guanylate_cyc"/>
    <property type="match status" value="1"/>
</dbReference>
<dbReference type="Pfam" id="PF07714">
    <property type="entry name" value="PK_Tyr_Ser-Thr"/>
    <property type="match status" value="1"/>
</dbReference>
<dbReference type="PRINTS" id="PR00255">
    <property type="entry name" value="NATPEPTIDER"/>
</dbReference>
<dbReference type="SMART" id="SM00044">
    <property type="entry name" value="CYCc"/>
    <property type="match status" value="1"/>
</dbReference>
<dbReference type="SUPFAM" id="SSF55073">
    <property type="entry name" value="Nucleotide cyclase"/>
    <property type="match status" value="1"/>
</dbReference>
<dbReference type="SUPFAM" id="SSF53822">
    <property type="entry name" value="Periplasmic binding protein-like I"/>
    <property type="match status" value="1"/>
</dbReference>
<dbReference type="SUPFAM" id="SSF56112">
    <property type="entry name" value="Protein kinase-like (PK-like)"/>
    <property type="match status" value="1"/>
</dbReference>
<dbReference type="PROSITE" id="PS00452">
    <property type="entry name" value="GUANYLATE_CYCLASE_1"/>
    <property type="match status" value="1"/>
</dbReference>
<dbReference type="PROSITE" id="PS50125">
    <property type="entry name" value="GUANYLATE_CYCLASE_2"/>
    <property type="match status" value="1"/>
</dbReference>
<dbReference type="PROSITE" id="PS50011">
    <property type="entry name" value="PROTEIN_KINASE_DOM"/>
    <property type="match status" value="1"/>
</dbReference>
<gene>
    <name evidence="16" type="primary">gcy-28</name>
    <name evidence="16" type="ORF">T01A4.1</name>
</gene>
<protein>
    <recommendedName>
        <fullName evidence="11">Receptor-type guanylate cyclase gcy-28</fullName>
        <ecNumber evidence="9">4.6.1.2</ecNumber>
    </recommendedName>
    <alternativeName>
        <fullName evidence="10">GCY-X1</fullName>
    </alternativeName>
</protein>
<proteinExistence type="evidence at protein level"/>
<sequence length="1276" mass="144989">MLRWLTLLSCILLTALHGNIVEDVGAAQQASYPPPPPPFPFNVIVILPKRESTYDNFGMTLQKAMPVIDIAVQEVIKAKKLPPGWINLTYWDSRLYEDILLAERHATVGVIQAYCEHRLDAILGFADNYGLATVTKVTAGLNGGIPILTTSGMPSLLNSKKEYPFLTRMQGSYRLLADSMYQLIAYHDEDSVSKSNSSLNYLNLIFFYHDKRRAVNRVIAQDESQETGATSSHCYFSLYAIKRYFTEKSKTFKREWALNTPQFPFDEDLVIERETFKQWLREISLQSNVIILCASPDTVREIMLAAHDLGMATSGEYVFINIDVSTGSHAEQPWIRANDTNNEENEKAKEAYRALKTISLRRSDLDEYKNFELRVKERADQKYNYTNITGKDYEMNNFISAFYDAVLLYAIALNETIQSGLDPRNGHNITSRMWGRTFVGITGNVSIDHNGDRYSDYSLLDLDPVQNRFVEVAYYSGASNQLKTVGQLHWVGGKPPTDLPICGYDKSKCPGYPLHVYLLMGSFLLILVLVGLFIFFWRRYKLEQELAAMSWKIRWEELDGEESQKKNEKKKAKKRKNHNDYLPESDPLLRSTSRSSVNSDKFDEDSLIPIRFRLRSSSSGTTRKISAMIDRKLSIFTRKKSTPPSESQKNGGLTPNSLQKAENGDCSPINEVQFRLPLNDRRVSSPSSEATRKKNSNEEDPENGAKKSLSLKNRKLSFGMVSFKSGSGGSVETIAQNNTQIYTKTAIFKGVVVAIKKLNIDPKKYPRLDLSRAQLMELKKMKDLQHDHITRFTGACIDFPHYCVVTEYCPKGSLEDILENEKIELDKLMKYSLLHDLVKGLFFLHNSEIRSHGRLKSSNCVVDSRFVLKVTDFGLHRLHCLEEINLEEIGEHAYYKKMLWTAPELLRDSNAPPMGTQKGDIYSFAIILHEMMFRKGVFALENEDLSPNEIVQRVRKPVSEDQEPLRPWVSETGEGEGDDALNDTLLSLMVACWSEDPHERPEVSSVRKAVRSLNRDNETSNLVDNLLKRMEQYANNLEGLVEERTQEYLAEKKKVEELLHQLLPPAIADTLIAGRAVQAESYDCVTIYFSDIVGFTSLSSQSTPMQVVTLLNDLYLAFDGVVDNFKVYKVETIGDAYMVVSGLPERRDDHANQIAQMSLSLLHKVKNFVIRHRPHEQLKLRIGMHSGSVVAGVVGSKMPRYCLFGDTVNTSSRMESNGLPLKIHVSQQTYDILMQEAGFKLELRGSVEMKGKGMQTTYWLRGYKDVEIPDFGEEFA</sequence>